<gene>
    <name evidence="1" type="primary">clpX</name>
    <name type="ordered locus">SACOL1721</name>
</gene>
<organism>
    <name type="scientific">Staphylococcus aureus (strain COL)</name>
    <dbReference type="NCBI Taxonomy" id="93062"/>
    <lineage>
        <taxon>Bacteria</taxon>
        <taxon>Bacillati</taxon>
        <taxon>Bacillota</taxon>
        <taxon>Bacilli</taxon>
        <taxon>Bacillales</taxon>
        <taxon>Staphylococcaceae</taxon>
        <taxon>Staphylococcus</taxon>
    </lineage>
</organism>
<feature type="chain" id="PRO_0000160419" description="ATP-dependent Clp protease ATP-binding subunit ClpX">
    <location>
        <begin position="1"/>
        <end position="420"/>
    </location>
</feature>
<feature type="domain" description="ClpX-type ZB" evidence="2">
    <location>
        <begin position="1"/>
        <end position="54"/>
    </location>
</feature>
<feature type="binding site" evidence="2">
    <location>
        <position position="13"/>
    </location>
    <ligand>
        <name>Zn(2+)</name>
        <dbReference type="ChEBI" id="CHEBI:29105"/>
    </ligand>
</feature>
<feature type="binding site" evidence="2">
    <location>
        <position position="16"/>
    </location>
    <ligand>
        <name>Zn(2+)</name>
        <dbReference type="ChEBI" id="CHEBI:29105"/>
    </ligand>
</feature>
<feature type="binding site" evidence="2">
    <location>
        <position position="35"/>
    </location>
    <ligand>
        <name>Zn(2+)</name>
        <dbReference type="ChEBI" id="CHEBI:29105"/>
    </ligand>
</feature>
<feature type="binding site" evidence="2">
    <location>
        <position position="38"/>
    </location>
    <ligand>
        <name>Zn(2+)</name>
        <dbReference type="ChEBI" id="CHEBI:29105"/>
    </ligand>
</feature>
<feature type="binding site" evidence="1">
    <location>
        <begin position="118"/>
        <end position="125"/>
    </location>
    <ligand>
        <name>ATP</name>
        <dbReference type="ChEBI" id="CHEBI:30616"/>
    </ligand>
</feature>
<proteinExistence type="inferred from homology"/>
<reference key="1">
    <citation type="journal article" date="2005" name="J. Bacteriol.">
        <title>Insights on evolution of virulence and resistance from the complete genome analysis of an early methicillin-resistant Staphylococcus aureus strain and a biofilm-producing methicillin-resistant Staphylococcus epidermidis strain.</title>
        <authorList>
            <person name="Gill S.R."/>
            <person name="Fouts D.E."/>
            <person name="Archer G.L."/>
            <person name="Mongodin E.F."/>
            <person name="DeBoy R.T."/>
            <person name="Ravel J."/>
            <person name="Paulsen I.T."/>
            <person name="Kolonay J.F."/>
            <person name="Brinkac L.M."/>
            <person name="Beanan M.J."/>
            <person name="Dodson R.J."/>
            <person name="Daugherty S.C."/>
            <person name="Madupu R."/>
            <person name="Angiuoli S.V."/>
            <person name="Durkin A.S."/>
            <person name="Haft D.H."/>
            <person name="Vamathevan J.J."/>
            <person name="Khouri H."/>
            <person name="Utterback T.R."/>
            <person name="Lee C."/>
            <person name="Dimitrov G."/>
            <person name="Jiang L."/>
            <person name="Qin H."/>
            <person name="Weidman J."/>
            <person name="Tran K."/>
            <person name="Kang K.H."/>
            <person name="Hance I.R."/>
            <person name="Nelson K.E."/>
            <person name="Fraser C.M."/>
        </authorList>
    </citation>
    <scope>NUCLEOTIDE SEQUENCE [LARGE SCALE GENOMIC DNA]</scope>
    <source>
        <strain>COL</strain>
    </source>
</reference>
<evidence type="ECO:0000255" key="1">
    <source>
        <dbReference type="HAMAP-Rule" id="MF_00175"/>
    </source>
</evidence>
<evidence type="ECO:0000255" key="2">
    <source>
        <dbReference type="PROSITE-ProRule" id="PRU01250"/>
    </source>
</evidence>
<sequence>MFKFNEDEENLKCSFCGKDQDQVKKLVAGSGVYICNECIELCSEIVEEELAQNTSEAMTELPTPKEIMDHLNEYVIGQEKAKKSLAVAVYNHYKRIQQLGPKEDDVELQKSNIALIGPTGSGKTLLAQTLAKTLNVPFAIADATSLTEAGYVGDDVENILLRLIQAADFDIDKAEKGIIYVDEIDKIARKSENTSITRDVSGEGVQQALLKILEGTTASVPPQGGRKHPNQEMIQIDTTNILFILGGAFDGIEEVIKRRLGEKVIGFSSNEADKYDEQALLAQIRPEDLQAYGLIPEFIGRVPIVANLETLDVTALKNILTQPKNALVKQYTKMLELDDVDLEFTEEALSAISEKAIERKTGARGLRSIIEESLIDIMFDVPSNENVTKVVITAQTINEETEPELYDAEGNLINNSKTSA</sequence>
<dbReference type="EMBL" id="CP000046">
    <property type="protein sequence ID" value="AAW36826.1"/>
    <property type="molecule type" value="Genomic_DNA"/>
</dbReference>
<dbReference type="RefSeq" id="WP_000472302.1">
    <property type="nucleotide sequence ID" value="NZ_JBGOFO010000003.1"/>
</dbReference>
<dbReference type="SMR" id="Q5HF98"/>
<dbReference type="KEGG" id="sac:SACOL1721"/>
<dbReference type="HOGENOM" id="CLU_014218_8_2_9"/>
<dbReference type="Proteomes" id="UP000000530">
    <property type="component" value="Chromosome"/>
</dbReference>
<dbReference type="GO" id="GO:0009376">
    <property type="term" value="C:HslUV protease complex"/>
    <property type="evidence" value="ECO:0007669"/>
    <property type="project" value="TreeGrafter"/>
</dbReference>
<dbReference type="GO" id="GO:0005524">
    <property type="term" value="F:ATP binding"/>
    <property type="evidence" value="ECO:0007669"/>
    <property type="project" value="UniProtKB-UniRule"/>
</dbReference>
<dbReference type="GO" id="GO:0016887">
    <property type="term" value="F:ATP hydrolysis activity"/>
    <property type="evidence" value="ECO:0007669"/>
    <property type="project" value="InterPro"/>
</dbReference>
<dbReference type="GO" id="GO:0140662">
    <property type="term" value="F:ATP-dependent protein folding chaperone"/>
    <property type="evidence" value="ECO:0007669"/>
    <property type="project" value="InterPro"/>
</dbReference>
<dbReference type="GO" id="GO:0046983">
    <property type="term" value="F:protein dimerization activity"/>
    <property type="evidence" value="ECO:0007669"/>
    <property type="project" value="InterPro"/>
</dbReference>
<dbReference type="GO" id="GO:0051082">
    <property type="term" value="F:unfolded protein binding"/>
    <property type="evidence" value="ECO:0007669"/>
    <property type="project" value="UniProtKB-UniRule"/>
</dbReference>
<dbReference type="GO" id="GO:0008270">
    <property type="term" value="F:zinc ion binding"/>
    <property type="evidence" value="ECO:0007669"/>
    <property type="project" value="InterPro"/>
</dbReference>
<dbReference type="GO" id="GO:0051301">
    <property type="term" value="P:cell division"/>
    <property type="evidence" value="ECO:0007669"/>
    <property type="project" value="TreeGrafter"/>
</dbReference>
<dbReference type="GO" id="GO:0051603">
    <property type="term" value="P:proteolysis involved in protein catabolic process"/>
    <property type="evidence" value="ECO:0007669"/>
    <property type="project" value="TreeGrafter"/>
</dbReference>
<dbReference type="CDD" id="cd19497">
    <property type="entry name" value="RecA-like_ClpX"/>
    <property type="match status" value="1"/>
</dbReference>
<dbReference type="FunFam" id="1.10.8.60:FF:000002">
    <property type="entry name" value="ATP-dependent Clp protease ATP-binding subunit ClpX"/>
    <property type="match status" value="1"/>
</dbReference>
<dbReference type="FunFam" id="3.40.50.300:FF:000005">
    <property type="entry name" value="ATP-dependent Clp protease ATP-binding subunit ClpX"/>
    <property type="match status" value="1"/>
</dbReference>
<dbReference type="Gene3D" id="1.10.8.60">
    <property type="match status" value="1"/>
</dbReference>
<dbReference type="Gene3D" id="6.20.220.10">
    <property type="entry name" value="ClpX chaperone, C4-type zinc finger domain"/>
    <property type="match status" value="1"/>
</dbReference>
<dbReference type="Gene3D" id="3.40.50.300">
    <property type="entry name" value="P-loop containing nucleotide triphosphate hydrolases"/>
    <property type="match status" value="1"/>
</dbReference>
<dbReference type="HAMAP" id="MF_00175">
    <property type="entry name" value="ClpX"/>
    <property type="match status" value="1"/>
</dbReference>
<dbReference type="InterPro" id="IPR003593">
    <property type="entry name" value="AAA+_ATPase"/>
</dbReference>
<dbReference type="InterPro" id="IPR050052">
    <property type="entry name" value="ATP-dep_Clp_protease_ClpX"/>
</dbReference>
<dbReference type="InterPro" id="IPR003959">
    <property type="entry name" value="ATPase_AAA_core"/>
</dbReference>
<dbReference type="InterPro" id="IPR019489">
    <property type="entry name" value="Clp_ATPase_C"/>
</dbReference>
<dbReference type="InterPro" id="IPR004487">
    <property type="entry name" value="Clp_protease_ATP-bd_su_ClpX"/>
</dbReference>
<dbReference type="InterPro" id="IPR046425">
    <property type="entry name" value="ClpX_bact"/>
</dbReference>
<dbReference type="InterPro" id="IPR027417">
    <property type="entry name" value="P-loop_NTPase"/>
</dbReference>
<dbReference type="InterPro" id="IPR010603">
    <property type="entry name" value="Znf_CppX_C4"/>
</dbReference>
<dbReference type="InterPro" id="IPR038366">
    <property type="entry name" value="Znf_CppX_C4_sf"/>
</dbReference>
<dbReference type="NCBIfam" id="TIGR00382">
    <property type="entry name" value="clpX"/>
    <property type="match status" value="1"/>
</dbReference>
<dbReference type="NCBIfam" id="NF003745">
    <property type="entry name" value="PRK05342.1"/>
    <property type="match status" value="1"/>
</dbReference>
<dbReference type="PANTHER" id="PTHR48102:SF7">
    <property type="entry name" value="ATP-DEPENDENT CLP PROTEASE ATP-BINDING SUBUNIT CLPX-LIKE, MITOCHONDRIAL"/>
    <property type="match status" value="1"/>
</dbReference>
<dbReference type="PANTHER" id="PTHR48102">
    <property type="entry name" value="ATP-DEPENDENT CLP PROTEASE ATP-BINDING SUBUNIT CLPX-LIKE, MITOCHONDRIAL-RELATED"/>
    <property type="match status" value="1"/>
</dbReference>
<dbReference type="Pfam" id="PF07724">
    <property type="entry name" value="AAA_2"/>
    <property type="match status" value="1"/>
</dbReference>
<dbReference type="Pfam" id="PF10431">
    <property type="entry name" value="ClpB_D2-small"/>
    <property type="match status" value="1"/>
</dbReference>
<dbReference type="Pfam" id="PF06689">
    <property type="entry name" value="zf-C4_ClpX"/>
    <property type="match status" value="1"/>
</dbReference>
<dbReference type="SMART" id="SM00382">
    <property type="entry name" value="AAA"/>
    <property type="match status" value="1"/>
</dbReference>
<dbReference type="SMART" id="SM01086">
    <property type="entry name" value="ClpB_D2-small"/>
    <property type="match status" value="1"/>
</dbReference>
<dbReference type="SMART" id="SM00994">
    <property type="entry name" value="zf-C4_ClpX"/>
    <property type="match status" value="1"/>
</dbReference>
<dbReference type="SUPFAM" id="SSF57716">
    <property type="entry name" value="Glucocorticoid receptor-like (DNA-binding domain)"/>
    <property type="match status" value="1"/>
</dbReference>
<dbReference type="SUPFAM" id="SSF52540">
    <property type="entry name" value="P-loop containing nucleoside triphosphate hydrolases"/>
    <property type="match status" value="1"/>
</dbReference>
<dbReference type="PROSITE" id="PS51902">
    <property type="entry name" value="CLPX_ZB"/>
    <property type="match status" value="1"/>
</dbReference>
<keyword id="KW-0067">ATP-binding</keyword>
<keyword id="KW-0143">Chaperone</keyword>
<keyword id="KW-0479">Metal-binding</keyword>
<keyword id="KW-0547">Nucleotide-binding</keyword>
<keyword id="KW-0862">Zinc</keyword>
<accession>Q5HF98</accession>
<name>CLPX_STAAC</name>
<comment type="function">
    <text evidence="1">ATP-dependent specificity component of the Clp protease. It directs the protease to specific substrates. Can perform chaperone functions in the absence of ClpP.</text>
</comment>
<comment type="subunit">
    <text evidence="1">Component of the ClpX-ClpP complex. Forms a hexameric ring that, in the presence of ATP, binds to fourteen ClpP subunits assembled into a disk-like structure with a central cavity, resembling the structure of eukaryotic proteasomes.</text>
</comment>
<comment type="similarity">
    <text evidence="1">Belongs to the ClpX chaperone family.</text>
</comment>
<protein>
    <recommendedName>
        <fullName evidence="1">ATP-dependent Clp protease ATP-binding subunit ClpX</fullName>
    </recommendedName>
</protein>